<evidence type="ECO:0000255" key="1">
    <source>
        <dbReference type="HAMAP-Rule" id="MF_01260"/>
    </source>
</evidence>
<dbReference type="EC" id="3.1.1.85" evidence="1"/>
<dbReference type="EMBL" id="AE003849">
    <property type="protein sequence ID" value="AAF84165.1"/>
    <property type="molecule type" value="Genomic_DNA"/>
</dbReference>
<dbReference type="PIR" id="C82692">
    <property type="entry name" value="C82692"/>
</dbReference>
<dbReference type="RefSeq" id="WP_010893860.1">
    <property type="nucleotide sequence ID" value="NC_002488.3"/>
</dbReference>
<dbReference type="SMR" id="Q9PDM3"/>
<dbReference type="STRING" id="160492.XF_1356"/>
<dbReference type="ESTHER" id="xylfa-XF1356">
    <property type="family name" value="BioH"/>
</dbReference>
<dbReference type="KEGG" id="xfa:XF_1356"/>
<dbReference type="PATRIC" id="fig|160492.11.peg.1431"/>
<dbReference type="eggNOG" id="COG2267">
    <property type="taxonomic scope" value="Bacteria"/>
</dbReference>
<dbReference type="HOGENOM" id="CLU_020336_12_2_6"/>
<dbReference type="UniPathway" id="UPA00078"/>
<dbReference type="Proteomes" id="UP000000812">
    <property type="component" value="Chromosome"/>
</dbReference>
<dbReference type="GO" id="GO:0005737">
    <property type="term" value="C:cytoplasm"/>
    <property type="evidence" value="ECO:0007669"/>
    <property type="project" value="UniProtKB-SubCell"/>
</dbReference>
<dbReference type="GO" id="GO:0016020">
    <property type="term" value="C:membrane"/>
    <property type="evidence" value="ECO:0007669"/>
    <property type="project" value="TreeGrafter"/>
</dbReference>
<dbReference type="GO" id="GO:0090499">
    <property type="term" value="F:pimelyl-[acyl-carrier protein] methyl ester esterase activity"/>
    <property type="evidence" value="ECO:0007669"/>
    <property type="project" value="UniProtKB-EC"/>
</dbReference>
<dbReference type="GO" id="GO:0009102">
    <property type="term" value="P:biotin biosynthetic process"/>
    <property type="evidence" value="ECO:0007669"/>
    <property type="project" value="UniProtKB-UniRule"/>
</dbReference>
<dbReference type="Gene3D" id="3.40.50.1820">
    <property type="entry name" value="alpha/beta hydrolase"/>
    <property type="match status" value="1"/>
</dbReference>
<dbReference type="HAMAP" id="MF_01260">
    <property type="entry name" value="Carboxylester"/>
    <property type="match status" value="1"/>
</dbReference>
<dbReference type="InterPro" id="IPR000073">
    <property type="entry name" value="AB_hydrolase_1"/>
</dbReference>
<dbReference type="InterPro" id="IPR029058">
    <property type="entry name" value="AB_hydrolase_fold"/>
</dbReference>
<dbReference type="InterPro" id="IPR050266">
    <property type="entry name" value="AB_hydrolase_sf"/>
</dbReference>
<dbReference type="InterPro" id="IPR010076">
    <property type="entry name" value="BioH"/>
</dbReference>
<dbReference type="NCBIfam" id="TIGR01738">
    <property type="entry name" value="bioH"/>
    <property type="match status" value="1"/>
</dbReference>
<dbReference type="PANTHER" id="PTHR43798:SF31">
    <property type="entry name" value="AB HYDROLASE SUPERFAMILY PROTEIN YCLE"/>
    <property type="match status" value="1"/>
</dbReference>
<dbReference type="PANTHER" id="PTHR43798">
    <property type="entry name" value="MONOACYLGLYCEROL LIPASE"/>
    <property type="match status" value="1"/>
</dbReference>
<dbReference type="Pfam" id="PF00561">
    <property type="entry name" value="Abhydrolase_1"/>
    <property type="match status" value="1"/>
</dbReference>
<dbReference type="SUPFAM" id="SSF53474">
    <property type="entry name" value="alpha/beta-Hydrolases"/>
    <property type="match status" value="1"/>
</dbReference>
<reference key="1">
    <citation type="journal article" date="2000" name="Nature">
        <title>The genome sequence of the plant pathogen Xylella fastidiosa.</title>
        <authorList>
            <person name="Simpson A.J.G."/>
            <person name="Reinach F.C."/>
            <person name="Arruda P."/>
            <person name="Abreu F.A."/>
            <person name="Acencio M."/>
            <person name="Alvarenga R."/>
            <person name="Alves L.M.C."/>
            <person name="Araya J.E."/>
            <person name="Baia G.S."/>
            <person name="Baptista C.S."/>
            <person name="Barros M.H."/>
            <person name="Bonaccorsi E.D."/>
            <person name="Bordin S."/>
            <person name="Bove J.M."/>
            <person name="Briones M.R.S."/>
            <person name="Bueno M.R.P."/>
            <person name="Camargo A.A."/>
            <person name="Camargo L.E.A."/>
            <person name="Carraro D.M."/>
            <person name="Carrer H."/>
            <person name="Colauto N.B."/>
            <person name="Colombo C."/>
            <person name="Costa F.F."/>
            <person name="Costa M.C.R."/>
            <person name="Costa-Neto C.M."/>
            <person name="Coutinho L.L."/>
            <person name="Cristofani M."/>
            <person name="Dias-Neto E."/>
            <person name="Docena C."/>
            <person name="El-Dorry H."/>
            <person name="Facincani A.P."/>
            <person name="Ferreira A.J.S."/>
            <person name="Ferreira V.C.A."/>
            <person name="Ferro J.A."/>
            <person name="Fraga J.S."/>
            <person name="Franca S.C."/>
            <person name="Franco M.C."/>
            <person name="Frohme M."/>
            <person name="Furlan L.R."/>
            <person name="Garnier M."/>
            <person name="Goldman G.H."/>
            <person name="Goldman M.H.S."/>
            <person name="Gomes S.L."/>
            <person name="Gruber A."/>
            <person name="Ho P.L."/>
            <person name="Hoheisel J.D."/>
            <person name="Junqueira M.L."/>
            <person name="Kemper E.L."/>
            <person name="Kitajima J.P."/>
            <person name="Krieger J.E."/>
            <person name="Kuramae E.E."/>
            <person name="Laigret F."/>
            <person name="Lambais M.R."/>
            <person name="Leite L.C.C."/>
            <person name="Lemos E.G.M."/>
            <person name="Lemos M.V.F."/>
            <person name="Lopes S.A."/>
            <person name="Lopes C.R."/>
            <person name="Machado J.A."/>
            <person name="Machado M.A."/>
            <person name="Madeira A.M.B.N."/>
            <person name="Madeira H.M.F."/>
            <person name="Marino C.L."/>
            <person name="Marques M.V."/>
            <person name="Martins E.A.L."/>
            <person name="Martins E.M.F."/>
            <person name="Matsukuma A.Y."/>
            <person name="Menck C.F.M."/>
            <person name="Miracca E.C."/>
            <person name="Miyaki C.Y."/>
            <person name="Monteiro-Vitorello C.B."/>
            <person name="Moon D.H."/>
            <person name="Nagai M.A."/>
            <person name="Nascimento A.L.T.O."/>
            <person name="Netto L.E.S."/>
            <person name="Nhani A. Jr."/>
            <person name="Nobrega F.G."/>
            <person name="Nunes L.R."/>
            <person name="Oliveira M.A."/>
            <person name="de Oliveira M.C."/>
            <person name="de Oliveira R.C."/>
            <person name="Palmieri D.A."/>
            <person name="Paris A."/>
            <person name="Peixoto B.R."/>
            <person name="Pereira G.A.G."/>
            <person name="Pereira H.A. Jr."/>
            <person name="Pesquero J.B."/>
            <person name="Quaggio R.B."/>
            <person name="Roberto P.G."/>
            <person name="Rodrigues V."/>
            <person name="de Rosa A.J.M."/>
            <person name="de Rosa V.E. Jr."/>
            <person name="de Sa R.G."/>
            <person name="Santelli R.V."/>
            <person name="Sawasaki H.E."/>
            <person name="da Silva A.C.R."/>
            <person name="da Silva A.M."/>
            <person name="da Silva F.R."/>
            <person name="Silva W.A. Jr."/>
            <person name="da Silveira J.F."/>
            <person name="Silvestri M.L.Z."/>
            <person name="Siqueira W.J."/>
            <person name="de Souza A.A."/>
            <person name="de Souza A.P."/>
            <person name="Terenzi M.F."/>
            <person name="Truffi D."/>
            <person name="Tsai S.M."/>
            <person name="Tsuhako M.H."/>
            <person name="Vallada H."/>
            <person name="Van Sluys M.A."/>
            <person name="Verjovski-Almeida S."/>
            <person name="Vettore A.L."/>
            <person name="Zago M.A."/>
            <person name="Zatz M."/>
            <person name="Meidanis J."/>
            <person name="Setubal J.C."/>
        </authorList>
    </citation>
    <scope>NUCLEOTIDE SEQUENCE [LARGE SCALE GENOMIC DNA]</scope>
    <source>
        <strain>9a5c</strain>
    </source>
</reference>
<gene>
    <name evidence="1" type="primary">bioH</name>
    <name type="ordered locus">XF_1356</name>
</gene>
<keyword id="KW-0093">Biotin biosynthesis</keyword>
<keyword id="KW-0963">Cytoplasm</keyword>
<keyword id="KW-0378">Hydrolase</keyword>
<keyword id="KW-0719">Serine esterase</keyword>
<proteinExistence type="inferred from homology"/>
<feature type="chain" id="PRO_0000204504" description="Pimeloyl-[acyl-carrier protein] methyl ester esterase">
    <location>
        <begin position="1"/>
        <end position="255"/>
    </location>
</feature>
<feature type="active site" description="Nucleophile" evidence="1">
    <location>
        <position position="78"/>
    </location>
</feature>
<feature type="active site" evidence="1">
    <location>
        <position position="203"/>
    </location>
</feature>
<feature type="active site" evidence="1">
    <location>
        <position position="233"/>
    </location>
</feature>
<feature type="binding site" evidence="1">
    <location>
        <position position="18"/>
    </location>
    <ligand>
        <name>substrate</name>
    </ligand>
</feature>
<feature type="binding site" evidence="1">
    <location>
        <begin position="78"/>
        <end position="79"/>
    </location>
    <ligand>
        <name>substrate</name>
    </ligand>
</feature>
<feature type="binding site" evidence="1">
    <location>
        <begin position="139"/>
        <end position="143"/>
    </location>
    <ligand>
        <name>substrate</name>
    </ligand>
</feature>
<feature type="binding site" evidence="1">
    <location>
        <position position="233"/>
    </location>
    <ligand>
        <name>substrate</name>
    </ligand>
</feature>
<protein>
    <recommendedName>
        <fullName evidence="1">Pimeloyl-[acyl-carrier protein] methyl ester esterase</fullName>
        <ecNumber evidence="1">3.1.1.85</ecNumber>
    </recommendedName>
    <alternativeName>
        <fullName evidence="1">Biotin synthesis protein BioH</fullName>
    </alternativeName>
    <alternativeName>
        <fullName evidence="1">Carboxylesterase BioH</fullName>
    </alternativeName>
</protein>
<comment type="function">
    <text evidence="1">The physiological role of BioH is to remove the methyl group introduced by BioC when the pimeloyl moiety is complete. It allows to synthesize pimeloyl-ACP via the fatty acid synthetic pathway through the hydrolysis of the ester bonds of pimeloyl-ACP esters.</text>
</comment>
<comment type="catalytic activity">
    <reaction evidence="1">
        <text>6-carboxyhexanoyl-[ACP] methyl ester + H2O = 6-carboxyhexanoyl-[ACP] + methanol + H(+)</text>
        <dbReference type="Rhea" id="RHEA:42700"/>
        <dbReference type="Rhea" id="RHEA-COMP:9955"/>
        <dbReference type="Rhea" id="RHEA-COMP:10186"/>
        <dbReference type="ChEBI" id="CHEBI:15377"/>
        <dbReference type="ChEBI" id="CHEBI:15378"/>
        <dbReference type="ChEBI" id="CHEBI:17790"/>
        <dbReference type="ChEBI" id="CHEBI:78846"/>
        <dbReference type="ChEBI" id="CHEBI:82735"/>
        <dbReference type="EC" id="3.1.1.85"/>
    </reaction>
</comment>
<comment type="pathway">
    <text evidence="1">Cofactor biosynthesis; biotin biosynthesis.</text>
</comment>
<comment type="subunit">
    <text evidence="1">Monomer.</text>
</comment>
<comment type="subcellular location">
    <subcellularLocation>
        <location evidence="1">Cytoplasm</location>
    </subcellularLocation>
</comment>
<comment type="similarity">
    <text evidence="1">Belongs to the AB hydrolase superfamily. Carboxylesterase BioH family.</text>
</comment>
<organism>
    <name type="scientific">Xylella fastidiosa (strain 9a5c)</name>
    <dbReference type="NCBI Taxonomy" id="160492"/>
    <lineage>
        <taxon>Bacteria</taxon>
        <taxon>Pseudomonadati</taxon>
        <taxon>Pseudomonadota</taxon>
        <taxon>Gammaproteobacteria</taxon>
        <taxon>Lysobacterales</taxon>
        <taxon>Lysobacteraceae</taxon>
        <taxon>Xylella</taxon>
    </lineage>
</organism>
<name>BIOH_XYLFA</name>
<accession>Q9PDM3</accession>
<sequence>MYIEVTGYGPALVLIHGWAMHSGVFAPLVEQLRAHHTLYLVDLPGHGYNHTTLTPLALPHVVHAIAAATPPAVWLGWSLGGLFALHAAATLPQVRGLIMLAATPCFVRREDWPHAVEVSIFTQFAEDLKQNYTETINRFLALDTLGSTYAQSELRQLRQILNARHTPNTATLQAGLELLAHTDLRRAVIDLTPPSLWIAGQRDRLVPAASIHAATALAPSGQTELLTITGGGHAPFLSHANQMTAALQHFIATLP</sequence>